<name>Y3544_ARATH</name>
<proteinExistence type="evidence at transcript level"/>
<dbReference type="EMBL" id="AB025639">
    <property type="protein sequence ID" value="BAB01314.1"/>
    <property type="status" value="ALT_SEQ"/>
    <property type="molecule type" value="Genomic_DNA"/>
</dbReference>
<dbReference type="EMBL" id="CP002686">
    <property type="protein sequence ID" value="AEE77011.1"/>
    <property type="molecule type" value="Genomic_DNA"/>
</dbReference>
<dbReference type="EMBL" id="AK176804">
    <property type="protein sequence ID" value="BAD44567.1"/>
    <property type="molecule type" value="mRNA"/>
</dbReference>
<dbReference type="RefSeq" id="NP_189171.2">
    <molecule id="Q67XL4-1"/>
    <property type="nucleotide sequence ID" value="NM_113440.4"/>
</dbReference>
<dbReference type="SMR" id="Q67XL4"/>
<dbReference type="FunCoup" id="Q67XL4">
    <property type="interactions" value="1570"/>
</dbReference>
<dbReference type="STRING" id="3702.Q67XL4"/>
<dbReference type="iPTMnet" id="Q67XL4"/>
<dbReference type="PaxDb" id="3702-AT3G25440.1"/>
<dbReference type="ProteomicsDB" id="234613">
    <molecule id="Q67XL4-1"/>
</dbReference>
<dbReference type="EnsemblPlants" id="AT3G25440.1">
    <molecule id="Q67XL4-1"/>
    <property type="protein sequence ID" value="AT3G25440.1"/>
    <property type="gene ID" value="AT3G25440"/>
</dbReference>
<dbReference type="Gramene" id="AT3G25440.1">
    <molecule id="Q67XL4-1"/>
    <property type="protein sequence ID" value="AT3G25440.1"/>
    <property type="gene ID" value="AT3G25440"/>
</dbReference>
<dbReference type="KEGG" id="ath:AT3G25440"/>
<dbReference type="Araport" id="AT3G25440"/>
<dbReference type="TAIR" id="AT3G25440">
    <property type="gene designation" value="LOH1"/>
</dbReference>
<dbReference type="eggNOG" id="KOG1990">
    <property type="taxonomic scope" value="Eukaryota"/>
</dbReference>
<dbReference type="InParanoid" id="Q67XL4"/>
<dbReference type="PhylomeDB" id="Q67XL4"/>
<dbReference type="PRO" id="PR:Q67XL4"/>
<dbReference type="Proteomes" id="UP000006548">
    <property type="component" value="Chromosome 3"/>
</dbReference>
<dbReference type="ExpressionAtlas" id="Q67XL4">
    <property type="expression patterns" value="baseline and differential"/>
</dbReference>
<dbReference type="GO" id="GO:0009507">
    <property type="term" value="C:chloroplast"/>
    <property type="evidence" value="ECO:0007669"/>
    <property type="project" value="UniProtKB-SubCell"/>
</dbReference>
<dbReference type="GO" id="GO:0003723">
    <property type="term" value="F:RNA binding"/>
    <property type="evidence" value="ECO:0007669"/>
    <property type="project" value="UniProtKB-KW"/>
</dbReference>
<dbReference type="Gene3D" id="3.30.110.60">
    <property type="entry name" value="YhbY-like"/>
    <property type="match status" value="1"/>
</dbReference>
<dbReference type="InterPro" id="IPR040286">
    <property type="entry name" value="At3g25440-like"/>
</dbReference>
<dbReference type="InterPro" id="IPR001890">
    <property type="entry name" value="RNA-binding_CRM"/>
</dbReference>
<dbReference type="InterPro" id="IPR035920">
    <property type="entry name" value="YhbY-like_sf"/>
</dbReference>
<dbReference type="PANTHER" id="PTHR31426">
    <property type="entry name" value="GROUP II INTRON SPLICING FACTOR CRS1-LIKE"/>
    <property type="match status" value="1"/>
</dbReference>
<dbReference type="PANTHER" id="PTHR31426:SF5">
    <property type="entry name" value="OS04G0492900 PROTEIN"/>
    <property type="match status" value="1"/>
</dbReference>
<dbReference type="Pfam" id="PF01985">
    <property type="entry name" value="CRS1_YhbY"/>
    <property type="match status" value="1"/>
</dbReference>
<dbReference type="SMART" id="SM01103">
    <property type="entry name" value="CRS1_YhbY"/>
    <property type="match status" value="1"/>
</dbReference>
<dbReference type="SUPFAM" id="SSF75471">
    <property type="entry name" value="YhbY-like"/>
    <property type="match status" value="1"/>
</dbReference>
<dbReference type="PROSITE" id="PS51295">
    <property type="entry name" value="CRM"/>
    <property type="match status" value="1"/>
</dbReference>
<protein>
    <recommendedName>
        <fullName>Uncharacterized CRM domain-containing protein At3g25440, chloroplastic</fullName>
    </recommendedName>
</protein>
<feature type="transit peptide" description="Chloroplast" evidence="1">
    <location>
        <begin position="1"/>
        <end position="72"/>
    </location>
</feature>
<feature type="chain" id="PRO_0000371549" description="Uncharacterized CRM domain-containing protein At3g25440, chloroplastic">
    <location>
        <begin position="73"/>
        <end position="444"/>
    </location>
</feature>
<feature type="domain" description="CRM" evidence="2">
    <location>
        <begin position="175"/>
        <end position="272"/>
    </location>
</feature>
<feature type="region of interest" description="Disordered" evidence="3">
    <location>
        <begin position="77"/>
        <end position="107"/>
    </location>
</feature>
<feature type="region of interest" description="Disordered" evidence="3">
    <location>
        <begin position="344"/>
        <end position="364"/>
    </location>
</feature>
<feature type="region of interest" description="Disordered" evidence="3">
    <location>
        <begin position="392"/>
        <end position="426"/>
    </location>
</feature>
<feature type="coiled-coil region" evidence="1">
    <location>
        <begin position="292"/>
        <end position="355"/>
    </location>
</feature>
<feature type="compositionally biased region" description="Polar residues" evidence="3">
    <location>
        <begin position="92"/>
        <end position="101"/>
    </location>
</feature>
<feature type="compositionally biased region" description="Acidic residues" evidence="3">
    <location>
        <begin position="346"/>
        <end position="357"/>
    </location>
</feature>
<feature type="compositionally biased region" description="Basic and acidic residues" evidence="3">
    <location>
        <begin position="406"/>
        <end position="426"/>
    </location>
</feature>
<organism>
    <name type="scientific">Arabidopsis thaliana</name>
    <name type="common">Mouse-ear cress</name>
    <dbReference type="NCBI Taxonomy" id="3702"/>
    <lineage>
        <taxon>Eukaryota</taxon>
        <taxon>Viridiplantae</taxon>
        <taxon>Streptophyta</taxon>
        <taxon>Embryophyta</taxon>
        <taxon>Tracheophyta</taxon>
        <taxon>Spermatophyta</taxon>
        <taxon>Magnoliopsida</taxon>
        <taxon>eudicotyledons</taxon>
        <taxon>Gunneridae</taxon>
        <taxon>Pentapetalae</taxon>
        <taxon>rosids</taxon>
        <taxon>malvids</taxon>
        <taxon>Brassicales</taxon>
        <taxon>Brassicaceae</taxon>
        <taxon>Camelineae</taxon>
        <taxon>Arabidopsis</taxon>
    </lineage>
</organism>
<gene>
    <name type="ordered locus">At3g25440</name>
    <name type="ORF">MWL2.5</name>
</gene>
<reference key="1">
    <citation type="journal article" date="2000" name="DNA Res.">
        <title>Structural analysis of Arabidopsis thaliana chromosome 3. I. Sequence features of the regions of 4,504,864 bp covered by sixty P1 and TAC clones.</title>
        <authorList>
            <person name="Sato S."/>
            <person name="Nakamura Y."/>
            <person name="Kaneko T."/>
            <person name="Katoh T."/>
            <person name="Asamizu E."/>
            <person name="Tabata S."/>
        </authorList>
    </citation>
    <scope>NUCLEOTIDE SEQUENCE [LARGE SCALE GENOMIC DNA]</scope>
    <source>
        <strain>cv. Columbia</strain>
    </source>
</reference>
<reference key="2">
    <citation type="journal article" date="2017" name="Plant J.">
        <title>Araport11: a complete reannotation of the Arabidopsis thaliana reference genome.</title>
        <authorList>
            <person name="Cheng C.Y."/>
            <person name="Krishnakumar V."/>
            <person name="Chan A.P."/>
            <person name="Thibaud-Nissen F."/>
            <person name="Schobel S."/>
            <person name="Town C.D."/>
        </authorList>
    </citation>
    <scope>GENOME REANNOTATION</scope>
    <source>
        <strain>cv. Columbia</strain>
    </source>
</reference>
<reference key="3">
    <citation type="submission" date="2004-09" db="EMBL/GenBank/DDBJ databases">
        <title>Large-scale analysis of RIKEN Arabidopsis full-length (RAFL) cDNAs.</title>
        <authorList>
            <person name="Totoki Y."/>
            <person name="Seki M."/>
            <person name="Ishida J."/>
            <person name="Nakajima M."/>
            <person name="Enju A."/>
            <person name="Kamiya A."/>
            <person name="Narusaka M."/>
            <person name="Shin-i T."/>
            <person name="Nakagawa M."/>
            <person name="Sakamoto N."/>
            <person name="Oishi K."/>
            <person name="Kohara Y."/>
            <person name="Kobayashi M."/>
            <person name="Toyoda A."/>
            <person name="Sakaki Y."/>
            <person name="Sakurai T."/>
            <person name="Iida K."/>
            <person name="Akiyama K."/>
            <person name="Satou M."/>
            <person name="Toyoda T."/>
            <person name="Konagaya A."/>
            <person name="Carninci P."/>
            <person name="Kawai J."/>
            <person name="Hayashizaki Y."/>
            <person name="Shinozaki K."/>
        </authorList>
    </citation>
    <scope>NUCLEOTIDE SEQUENCE [LARGE SCALE MRNA]</scope>
    <source>
        <strain>cv. Columbia</strain>
    </source>
</reference>
<sequence length="444" mass="51475">MGFLTAAIRVSTSAASMLLRRKSRQLGFLASSSPLFSSFNSMNRTISSCNIVCKVLHKESLTRPMWNVSFLRSSSFHSTPARETGDDDISKSENSSSQDGDSCTKLKRKKLKGKRAVVRWLKFFRWKKKKEFERMTSEEKILNKLRKARKKEERLMETMKKLEPSESAETTHDPEILTPEEHFYYLKMGLKCKNYVPVGRRGIYQGVILNMHLHWKKHQTLQVVIKTFTPDEVKEIAVELARLTGGIVLDVHEGNTIIMYRGKNYVQPPTEIMSPRITLPRKKALDKSKCRDALRAVRKYIPRLEQELQLLQAQAETKRDYTNVKVDDNQERSEELKKIIERSEECLEDEQEEDEAGLELATDSDLSDIFETDSELEDAKTERPLFLEEFEKFPAINNREDEDFGDLGKAKSEGEENDDDKSPNFDEVDKMFLRAAFLLKKKRR</sequence>
<comment type="subcellular location">
    <subcellularLocation>
        <location evidence="4">Plastid</location>
        <location evidence="4">Chloroplast</location>
    </subcellularLocation>
</comment>
<comment type="alternative products">
    <event type="alternative splicing"/>
    <isoform>
        <id>Q67XL4-1</id>
        <name>1</name>
        <sequence type="displayed"/>
    </isoform>
    <text>A number of isoforms are produced. According to EST sequences.</text>
</comment>
<comment type="sequence caution" evidence="4">
    <conflict type="erroneous gene model prediction">
        <sequence resource="EMBL-CDS" id="BAB01314"/>
    </conflict>
    <text>The predicted gene has been split into 2 genes: At3g25430 and At3g25440.</text>
</comment>
<accession>Q67XL4</accession>
<accession>Q9LSV7</accession>
<evidence type="ECO:0000255" key="1"/>
<evidence type="ECO:0000255" key="2">
    <source>
        <dbReference type="PROSITE-ProRule" id="PRU00626"/>
    </source>
</evidence>
<evidence type="ECO:0000256" key="3">
    <source>
        <dbReference type="SAM" id="MobiDB-lite"/>
    </source>
</evidence>
<evidence type="ECO:0000305" key="4"/>
<keyword id="KW-0025">Alternative splicing</keyword>
<keyword id="KW-0150">Chloroplast</keyword>
<keyword id="KW-0175">Coiled coil</keyword>
<keyword id="KW-0934">Plastid</keyword>
<keyword id="KW-1185">Reference proteome</keyword>
<keyword id="KW-0694">RNA-binding</keyword>
<keyword id="KW-0809">Transit peptide</keyword>